<protein>
    <recommendedName>
        <fullName>Ras-related and estrogen-regulated growth inhibitor</fullName>
        <ecNumber evidence="1">3.6.5.2</ecNumber>
    </recommendedName>
</protein>
<reference key="1">
    <citation type="journal article" date="2001" name="J. Biol. Chem.">
        <title>RERG is a novel ras-related, estrogen-regulated and growth-inhibitory gene in breast cancer.</title>
        <authorList>
            <person name="Finlin B.S."/>
            <person name="Gau C.-L."/>
            <person name="Murphy G.A."/>
            <person name="Shao H."/>
            <person name="Kimel T."/>
            <person name="Seitz R.S."/>
            <person name="Chiu Y.-F."/>
            <person name="Botstein D."/>
            <person name="Brown P.O."/>
            <person name="Der C.J."/>
            <person name="Tamanoi F."/>
            <person name="Andres D.A."/>
            <person name="Perou C.M."/>
        </authorList>
    </citation>
    <scope>NUCLEOTIDE SEQUENCE [MRNA] (ISOFORM 1)</scope>
    <scope>FUNCTION</scope>
    <scope>CATALYTIC ACTIVITY</scope>
    <scope>INDUCTION</scope>
    <scope>SUBCELLULAR LOCATION</scope>
    <scope>TISSUE SPECIFICITY</scope>
</reference>
<reference key="2">
    <citation type="journal article" date="2004" name="Nat. Genet.">
        <title>Complete sequencing and characterization of 21,243 full-length human cDNAs.</title>
        <authorList>
            <person name="Ota T."/>
            <person name="Suzuki Y."/>
            <person name="Nishikawa T."/>
            <person name="Otsuki T."/>
            <person name="Sugiyama T."/>
            <person name="Irie R."/>
            <person name="Wakamatsu A."/>
            <person name="Hayashi K."/>
            <person name="Sato H."/>
            <person name="Nagai K."/>
            <person name="Kimura K."/>
            <person name="Makita H."/>
            <person name="Sekine M."/>
            <person name="Obayashi M."/>
            <person name="Nishi T."/>
            <person name="Shibahara T."/>
            <person name="Tanaka T."/>
            <person name="Ishii S."/>
            <person name="Yamamoto J."/>
            <person name="Saito K."/>
            <person name="Kawai Y."/>
            <person name="Isono Y."/>
            <person name="Nakamura Y."/>
            <person name="Nagahari K."/>
            <person name="Murakami K."/>
            <person name="Yasuda T."/>
            <person name="Iwayanagi T."/>
            <person name="Wagatsuma M."/>
            <person name="Shiratori A."/>
            <person name="Sudo H."/>
            <person name="Hosoiri T."/>
            <person name="Kaku Y."/>
            <person name="Kodaira H."/>
            <person name="Kondo H."/>
            <person name="Sugawara M."/>
            <person name="Takahashi M."/>
            <person name="Kanda K."/>
            <person name="Yokoi T."/>
            <person name="Furuya T."/>
            <person name="Kikkawa E."/>
            <person name="Omura Y."/>
            <person name="Abe K."/>
            <person name="Kamihara K."/>
            <person name="Katsuta N."/>
            <person name="Sato K."/>
            <person name="Tanikawa M."/>
            <person name="Yamazaki M."/>
            <person name="Ninomiya K."/>
            <person name="Ishibashi T."/>
            <person name="Yamashita H."/>
            <person name="Murakawa K."/>
            <person name="Fujimori K."/>
            <person name="Tanai H."/>
            <person name="Kimata M."/>
            <person name="Watanabe M."/>
            <person name="Hiraoka S."/>
            <person name="Chiba Y."/>
            <person name="Ishida S."/>
            <person name="Ono Y."/>
            <person name="Takiguchi S."/>
            <person name="Watanabe S."/>
            <person name="Yosida M."/>
            <person name="Hotuta T."/>
            <person name="Kusano J."/>
            <person name="Kanehori K."/>
            <person name="Takahashi-Fujii A."/>
            <person name="Hara H."/>
            <person name="Tanase T.-O."/>
            <person name="Nomura Y."/>
            <person name="Togiya S."/>
            <person name="Komai F."/>
            <person name="Hara R."/>
            <person name="Takeuchi K."/>
            <person name="Arita M."/>
            <person name="Imose N."/>
            <person name="Musashino K."/>
            <person name="Yuuki H."/>
            <person name="Oshima A."/>
            <person name="Sasaki N."/>
            <person name="Aotsuka S."/>
            <person name="Yoshikawa Y."/>
            <person name="Matsunawa H."/>
            <person name="Ichihara T."/>
            <person name="Shiohata N."/>
            <person name="Sano S."/>
            <person name="Moriya S."/>
            <person name="Momiyama H."/>
            <person name="Satoh N."/>
            <person name="Takami S."/>
            <person name="Terashima Y."/>
            <person name="Suzuki O."/>
            <person name="Nakagawa S."/>
            <person name="Senoh A."/>
            <person name="Mizoguchi H."/>
            <person name="Goto Y."/>
            <person name="Shimizu F."/>
            <person name="Wakebe H."/>
            <person name="Hishigaki H."/>
            <person name="Watanabe T."/>
            <person name="Sugiyama A."/>
            <person name="Takemoto M."/>
            <person name="Kawakami B."/>
            <person name="Yamazaki M."/>
            <person name="Watanabe K."/>
            <person name="Kumagai A."/>
            <person name="Itakura S."/>
            <person name="Fukuzumi Y."/>
            <person name="Fujimori Y."/>
            <person name="Komiyama M."/>
            <person name="Tashiro H."/>
            <person name="Tanigami A."/>
            <person name="Fujiwara T."/>
            <person name="Ono T."/>
            <person name="Yamada K."/>
            <person name="Fujii Y."/>
            <person name="Ozaki K."/>
            <person name="Hirao M."/>
            <person name="Ohmori Y."/>
            <person name="Kawabata A."/>
            <person name="Hikiji T."/>
            <person name="Kobatake N."/>
            <person name="Inagaki H."/>
            <person name="Ikema Y."/>
            <person name="Okamoto S."/>
            <person name="Okitani R."/>
            <person name="Kawakami T."/>
            <person name="Noguchi S."/>
            <person name="Itoh T."/>
            <person name="Shigeta K."/>
            <person name="Senba T."/>
            <person name="Matsumura K."/>
            <person name="Nakajima Y."/>
            <person name="Mizuno T."/>
            <person name="Morinaga M."/>
            <person name="Sasaki M."/>
            <person name="Togashi T."/>
            <person name="Oyama M."/>
            <person name="Hata H."/>
            <person name="Watanabe M."/>
            <person name="Komatsu T."/>
            <person name="Mizushima-Sugano J."/>
            <person name="Satoh T."/>
            <person name="Shirai Y."/>
            <person name="Takahashi Y."/>
            <person name="Nakagawa K."/>
            <person name="Okumura K."/>
            <person name="Nagase T."/>
            <person name="Nomura N."/>
            <person name="Kikuchi H."/>
            <person name="Masuho Y."/>
            <person name="Yamashita R."/>
            <person name="Nakai K."/>
            <person name="Yada T."/>
            <person name="Nakamura Y."/>
            <person name="Ohara O."/>
            <person name="Isogai T."/>
            <person name="Sugano S."/>
        </authorList>
    </citation>
    <scope>NUCLEOTIDE SEQUENCE [LARGE SCALE MRNA] (ISOFORMS 1 AND 2)</scope>
    <source>
        <tissue>Caudate nucleus</tissue>
        <tissue>Trachea</tissue>
    </source>
</reference>
<reference key="3">
    <citation type="journal article" date="2006" name="Nature">
        <title>The finished DNA sequence of human chromosome 12.</title>
        <authorList>
            <person name="Scherer S.E."/>
            <person name="Muzny D.M."/>
            <person name="Buhay C.J."/>
            <person name="Chen R."/>
            <person name="Cree A."/>
            <person name="Ding Y."/>
            <person name="Dugan-Rocha S."/>
            <person name="Gill R."/>
            <person name="Gunaratne P."/>
            <person name="Harris R.A."/>
            <person name="Hawes A.C."/>
            <person name="Hernandez J."/>
            <person name="Hodgson A.V."/>
            <person name="Hume J."/>
            <person name="Jackson A."/>
            <person name="Khan Z.M."/>
            <person name="Kovar-Smith C."/>
            <person name="Lewis L.R."/>
            <person name="Lozado R.J."/>
            <person name="Metzker M.L."/>
            <person name="Milosavljevic A."/>
            <person name="Miner G.R."/>
            <person name="Montgomery K.T."/>
            <person name="Morgan M.B."/>
            <person name="Nazareth L.V."/>
            <person name="Scott G."/>
            <person name="Sodergren E."/>
            <person name="Song X.-Z."/>
            <person name="Steffen D."/>
            <person name="Lovering R.C."/>
            <person name="Wheeler D.A."/>
            <person name="Worley K.C."/>
            <person name="Yuan Y."/>
            <person name="Zhang Z."/>
            <person name="Adams C.Q."/>
            <person name="Ansari-Lari M.A."/>
            <person name="Ayele M."/>
            <person name="Brown M.J."/>
            <person name="Chen G."/>
            <person name="Chen Z."/>
            <person name="Clerc-Blankenburg K.P."/>
            <person name="Davis C."/>
            <person name="Delgado O."/>
            <person name="Dinh H.H."/>
            <person name="Draper H."/>
            <person name="Gonzalez-Garay M.L."/>
            <person name="Havlak P."/>
            <person name="Jackson L.R."/>
            <person name="Jacob L.S."/>
            <person name="Kelly S.H."/>
            <person name="Li L."/>
            <person name="Li Z."/>
            <person name="Liu J."/>
            <person name="Liu W."/>
            <person name="Lu J."/>
            <person name="Maheshwari M."/>
            <person name="Nguyen B.-V."/>
            <person name="Okwuonu G.O."/>
            <person name="Pasternak S."/>
            <person name="Perez L.M."/>
            <person name="Plopper F.J.H."/>
            <person name="Santibanez J."/>
            <person name="Shen H."/>
            <person name="Tabor P.E."/>
            <person name="Verduzco D."/>
            <person name="Waldron L."/>
            <person name="Wang Q."/>
            <person name="Williams G.A."/>
            <person name="Zhang J."/>
            <person name="Zhou J."/>
            <person name="Allen C.C."/>
            <person name="Amin A.G."/>
            <person name="Anyalebechi V."/>
            <person name="Bailey M."/>
            <person name="Barbaria J.A."/>
            <person name="Bimage K.E."/>
            <person name="Bryant N.P."/>
            <person name="Burch P.E."/>
            <person name="Burkett C.E."/>
            <person name="Burrell K.L."/>
            <person name="Calderon E."/>
            <person name="Cardenas V."/>
            <person name="Carter K."/>
            <person name="Casias K."/>
            <person name="Cavazos I."/>
            <person name="Cavazos S.R."/>
            <person name="Ceasar H."/>
            <person name="Chacko J."/>
            <person name="Chan S.N."/>
            <person name="Chavez D."/>
            <person name="Christopoulos C."/>
            <person name="Chu J."/>
            <person name="Cockrell R."/>
            <person name="Cox C.D."/>
            <person name="Dang M."/>
            <person name="Dathorne S.R."/>
            <person name="David R."/>
            <person name="Davis C.M."/>
            <person name="Davy-Carroll L."/>
            <person name="Deshazo D.R."/>
            <person name="Donlin J.E."/>
            <person name="D'Souza L."/>
            <person name="Eaves K.A."/>
            <person name="Egan A."/>
            <person name="Emery-Cohen A.J."/>
            <person name="Escotto M."/>
            <person name="Flagg N."/>
            <person name="Forbes L.D."/>
            <person name="Gabisi A.M."/>
            <person name="Garza M."/>
            <person name="Hamilton C."/>
            <person name="Henderson N."/>
            <person name="Hernandez O."/>
            <person name="Hines S."/>
            <person name="Hogues M.E."/>
            <person name="Huang M."/>
            <person name="Idlebird D.G."/>
            <person name="Johnson R."/>
            <person name="Jolivet A."/>
            <person name="Jones S."/>
            <person name="Kagan R."/>
            <person name="King L.M."/>
            <person name="Leal B."/>
            <person name="Lebow H."/>
            <person name="Lee S."/>
            <person name="LeVan J.M."/>
            <person name="Lewis L.C."/>
            <person name="London P."/>
            <person name="Lorensuhewa L.M."/>
            <person name="Loulseged H."/>
            <person name="Lovett D.A."/>
            <person name="Lucier A."/>
            <person name="Lucier R.L."/>
            <person name="Ma J."/>
            <person name="Madu R.C."/>
            <person name="Mapua P."/>
            <person name="Martindale A.D."/>
            <person name="Martinez E."/>
            <person name="Massey E."/>
            <person name="Mawhiney S."/>
            <person name="Meador M.G."/>
            <person name="Mendez S."/>
            <person name="Mercado C."/>
            <person name="Mercado I.C."/>
            <person name="Merritt C.E."/>
            <person name="Miner Z.L."/>
            <person name="Minja E."/>
            <person name="Mitchell T."/>
            <person name="Mohabbat F."/>
            <person name="Mohabbat K."/>
            <person name="Montgomery B."/>
            <person name="Moore N."/>
            <person name="Morris S."/>
            <person name="Munidasa M."/>
            <person name="Ngo R.N."/>
            <person name="Nguyen N.B."/>
            <person name="Nickerson E."/>
            <person name="Nwaokelemeh O.O."/>
            <person name="Nwokenkwo S."/>
            <person name="Obregon M."/>
            <person name="Oguh M."/>
            <person name="Oragunye N."/>
            <person name="Oviedo R.J."/>
            <person name="Parish B.J."/>
            <person name="Parker D.N."/>
            <person name="Parrish J."/>
            <person name="Parks K.L."/>
            <person name="Paul H.A."/>
            <person name="Payton B.A."/>
            <person name="Perez A."/>
            <person name="Perrin W."/>
            <person name="Pickens A."/>
            <person name="Primus E.L."/>
            <person name="Pu L.-L."/>
            <person name="Puazo M."/>
            <person name="Quiles M.M."/>
            <person name="Quiroz J.B."/>
            <person name="Rabata D."/>
            <person name="Reeves K."/>
            <person name="Ruiz S.J."/>
            <person name="Shao H."/>
            <person name="Sisson I."/>
            <person name="Sonaike T."/>
            <person name="Sorelle R.P."/>
            <person name="Sutton A.E."/>
            <person name="Svatek A.F."/>
            <person name="Svetz L.A."/>
            <person name="Tamerisa K.S."/>
            <person name="Taylor T.R."/>
            <person name="Teague B."/>
            <person name="Thomas N."/>
            <person name="Thorn R.D."/>
            <person name="Trejos Z.Y."/>
            <person name="Trevino B.K."/>
            <person name="Ukegbu O.N."/>
            <person name="Urban J.B."/>
            <person name="Vasquez L.I."/>
            <person name="Vera V.A."/>
            <person name="Villasana D.M."/>
            <person name="Wang L."/>
            <person name="Ward-Moore S."/>
            <person name="Warren J.T."/>
            <person name="Wei X."/>
            <person name="White F."/>
            <person name="Williamson A.L."/>
            <person name="Wleczyk R."/>
            <person name="Wooden H.S."/>
            <person name="Wooden S.H."/>
            <person name="Yen J."/>
            <person name="Yoon L."/>
            <person name="Yoon V."/>
            <person name="Zorrilla S.E."/>
            <person name="Nelson D."/>
            <person name="Kucherlapati R."/>
            <person name="Weinstock G."/>
            <person name="Gibbs R.A."/>
        </authorList>
    </citation>
    <scope>NUCLEOTIDE SEQUENCE [LARGE SCALE GENOMIC DNA]</scope>
</reference>
<reference key="4">
    <citation type="submission" date="2005-07" db="EMBL/GenBank/DDBJ databases">
        <authorList>
            <person name="Mural R.J."/>
            <person name="Istrail S."/>
            <person name="Sutton G.G."/>
            <person name="Florea L."/>
            <person name="Halpern A.L."/>
            <person name="Mobarry C.M."/>
            <person name="Lippert R."/>
            <person name="Walenz B."/>
            <person name="Shatkay H."/>
            <person name="Dew I."/>
            <person name="Miller J.R."/>
            <person name="Flanigan M.J."/>
            <person name="Edwards N.J."/>
            <person name="Bolanos R."/>
            <person name="Fasulo D."/>
            <person name="Halldorsson B.V."/>
            <person name="Hannenhalli S."/>
            <person name="Turner R."/>
            <person name="Yooseph S."/>
            <person name="Lu F."/>
            <person name="Nusskern D.R."/>
            <person name="Shue B.C."/>
            <person name="Zheng X.H."/>
            <person name="Zhong F."/>
            <person name="Delcher A.L."/>
            <person name="Huson D.H."/>
            <person name="Kravitz S.A."/>
            <person name="Mouchard L."/>
            <person name="Reinert K."/>
            <person name="Remington K.A."/>
            <person name="Clark A.G."/>
            <person name="Waterman M.S."/>
            <person name="Eichler E.E."/>
            <person name="Adams M.D."/>
            <person name="Hunkapiller M.W."/>
            <person name="Myers E.W."/>
            <person name="Venter J.C."/>
        </authorList>
    </citation>
    <scope>NUCLEOTIDE SEQUENCE [LARGE SCALE GENOMIC DNA]</scope>
</reference>
<reference key="5">
    <citation type="journal article" date="2004" name="Genome Res.">
        <title>The status, quality, and expansion of the NIH full-length cDNA project: the Mammalian Gene Collection (MGC).</title>
        <authorList>
            <consortium name="The MGC Project Team"/>
        </authorList>
    </citation>
    <scope>NUCLEOTIDE SEQUENCE [LARGE SCALE MRNA] (ISOFORM 1)</scope>
    <source>
        <tissue>Eye</tissue>
    </source>
</reference>
<reference key="6">
    <citation type="submission" date="2005-10" db="PDB data bank">
        <title>The crystal structure of human RERG in the GDP bound state.</title>
        <authorList>
            <consortium name="Structural genomics consortium (SGC)"/>
        </authorList>
    </citation>
    <scope>X-RAY CRYSTALLOGRAPHY (1.9 ANGSTROMS) OF 1-174 IN COMPLEX WITH GDP</scope>
</reference>
<gene>
    <name type="primary">RERG</name>
</gene>
<sequence>MAKSAEVKLAIFGRAGVGKSALVVRFLTKRFIWEYDPTLESTYRHQATIDDEVVSMEILDTAGQEDTIQREGHMRWGEGFVLVYDITDRGSFEEVLPLKNILDEIKKPKNVTLILVGNKADLDHSRQVSTEEGEKLATELACAFYECSACTGEGNITEIFYELCREVRRRRMVQGKTRRRSSTTHVKQAINKMLTKISS</sequence>
<evidence type="ECO:0000269" key="1">
    <source>
    </source>
</evidence>
<evidence type="ECO:0000303" key="2">
    <source>
    </source>
</evidence>
<evidence type="ECO:0000305" key="3"/>
<evidence type="ECO:0007829" key="4">
    <source>
        <dbReference type="PDB" id="2ATV"/>
    </source>
</evidence>
<accession>Q96A58</accession>
<accession>B2R9R0</accession>
<accession>B4DI02</accession>
<organism>
    <name type="scientific">Homo sapiens</name>
    <name type="common">Human</name>
    <dbReference type="NCBI Taxonomy" id="9606"/>
    <lineage>
        <taxon>Eukaryota</taxon>
        <taxon>Metazoa</taxon>
        <taxon>Chordata</taxon>
        <taxon>Craniata</taxon>
        <taxon>Vertebrata</taxon>
        <taxon>Euteleostomi</taxon>
        <taxon>Mammalia</taxon>
        <taxon>Eutheria</taxon>
        <taxon>Euarchontoglires</taxon>
        <taxon>Primates</taxon>
        <taxon>Haplorrhini</taxon>
        <taxon>Catarrhini</taxon>
        <taxon>Hominidae</taxon>
        <taxon>Homo</taxon>
    </lineage>
</organism>
<keyword id="KW-0002">3D-structure</keyword>
<keyword id="KW-0025">Alternative splicing</keyword>
<keyword id="KW-0963">Cytoplasm</keyword>
<keyword id="KW-0342">GTP-binding</keyword>
<keyword id="KW-0378">Hydrolase</keyword>
<keyword id="KW-0547">Nucleotide-binding</keyword>
<keyword id="KW-1267">Proteomics identification</keyword>
<keyword id="KW-1185">Reference proteome</keyword>
<comment type="function">
    <text evidence="1">Binds GDP/GTP and possesses intrinsic GTPase activity. Has higher affinity for GDP than for GTP. In cell lines overexpression leads to a reduction in the rate of proliferation, colony formation and in tumorigenic potential.</text>
</comment>
<comment type="catalytic activity">
    <reaction evidence="1">
        <text>GTP + H2O = GDP + phosphate + H(+)</text>
        <dbReference type="Rhea" id="RHEA:19669"/>
        <dbReference type="ChEBI" id="CHEBI:15377"/>
        <dbReference type="ChEBI" id="CHEBI:15378"/>
        <dbReference type="ChEBI" id="CHEBI:37565"/>
        <dbReference type="ChEBI" id="CHEBI:43474"/>
        <dbReference type="ChEBI" id="CHEBI:58189"/>
        <dbReference type="EC" id="3.6.5.2"/>
    </reaction>
</comment>
<comment type="interaction">
    <interactant intactId="EBI-2856342">
        <id>Q96A58</id>
    </interactant>
    <interactant intactId="EBI-7543347">
        <id>Q96PE2</id>
        <label>ARHGEF17</label>
    </interactant>
    <organismsDiffer>false</organismsDiffer>
    <experiments>2</experiments>
</comment>
<comment type="subcellular location">
    <subcellularLocation>
        <location evidence="1">Cytoplasm</location>
    </subcellularLocation>
</comment>
<comment type="alternative products">
    <event type="alternative splicing"/>
    <isoform>
        <id>Q96A58-1</id>
        <name>1</name>
        <sequence type="displayed"/>
    </isoform>
    <isoform>
        <id>Q96A58-2</id>
        <name>2</name>
        <sequence type="described" ref="VSP_043393"/>
    </isoform>
</comment>
<comment type="tissue specificity">
    <text evidence="1">Detected in heart, brain, placenta, lung, liver, skin, kidney and pancreas. Detected in estrogen receptor-positive breast-derived cell lines, but not in estrogen receptor-negative cell lines. Expression is decreased or lost in a significant proportion of primary breast tumors with poor clinical prognosis.</text>
</comment>
<comment type="induction">
    <text evidence="1">Up-regulated by estradiol. Down-regulated by tamoxifen.</text>
</comment>
<comment type="similarity">
    <text evidence="3">Belongs to the small GTPase superfamily. Ras family.</text>
</comment>
<feature type="chain" id="PRO_0000082723" description="Ras-related and estrogen-regulated growth inhibitor">
    <location>
        <begin position="1"/>
        <end position="199"/>
    </location>
</feature>
<feature type="binding site">
    <location>
        <begin position="13"/>
        <end position="20"/>
    </location>
    <ligand>
        <name>GTP</name>
        <dbReference type="ChEBI" id="CHEBI:37565"/>
    </ligand>
</feature>
<feature type="binding site">
    <location>
        <begin position="60"/>
        <end position="64"/>
    </location>
    <ligand>
        <name>GTP</name>
        <dbReference type="ChEBI" id="CHEBI:37565"/>
    </ligand>
</feature>
<feature type="binding site">
    <location>
        <begin position="118"/>
        <end position="121"/>
    </location>
    <ligand>
        <name>GTP</name>
        <dbReference type="ChEBI" id="CHEBI:37565"/>
    </ligand>
</feature>
<feature type="splice variant" id="VSP_043393" description="In isoform 2." evidence="2">
    <location>
        <begin position="21"/>
        <end position="39"/>
    </location>
</feature>
<feature type="strand" evidence="4">
    <location>
        <begin position="7"/>
        <end position="12"/>
    </location>
</feature>
<feature type="helix" evidence="4">
    <location>
        <begin position="19"/>
        <end position="28"/>
    </location>
</feature>
<feature type="strand" evidence="4">
    <location>
        <begin position="41"/>
        <end position="49"/>
    </location>
</feature>
<feature type="strand" evidence="4">
    <location>
        <begin position="52"/>
        <end position="60"/>
    </location>
</feature>
<feature type="helix" evidence="4">
    <location>
        <begin position="68"/>
        <end position="76"/>
    </location>
</feature>
<feature type="strand" evidence="4">
    <location>
        <begin position="78"/>
        <end position="85"/>
    </location>
</feature>
<feature type="helix" evidence="4">
    <location>
        <begin position="89"/>
        <end position="93"/>
    </location>
</feature>
<feature type="helix" evidence="4">
    <location>
        <begin position="95"/>
        <end position="106"/>
    </location>
</feature>
<feature type="strand" evidence="4">
    <location>
        <begin position="113"/>
        <end position="118"/>
    </location>
</feature>
<feature type="helix" evidence="4">
    <location>
        <begin position="120"/>
        <end position="125"/>
    </location>
</feature>
<feature type="helix" evidence="4">
    <location>
        <begin position="130"/>
        <end position="140"/>
    </location>
</feature>
<feature type="strand" evidence="4">
    <location>
        <begin position="142"/>
        <end position="146"/>
    </location>
</feature>
<feature type="turn" evidence="4">
    <location>
        <begin position="149"/>
        <end position="151"/>
    </location>
</feature>
<feature type="helix" evidence="4">
    <location>
        <begin position="156"/>
        <end position="171"/>
    </location>
</feature>
<dbReference type="EC" id="3.6.5.2" evidence="1"/>
<dbReference type="EMBL" id="AF339750">
    <property type="protein sequence ID" value="AAK98530.1"/>
    <property type="molecule type" value="mRNA"/>
</dbReference>
<dbReference type="EMBL" id="AK295343">
    <property type="protein sequence ID" value="BAG58314.1"/>
    <property type="molecule type" value="mRNA"/>
</dbReference>
<dbReference type="EMBL" id="AK313881">
    <property type="protein sequence ID" value="BAG36607.1"/>
    <property type="molecule type" value="mRNA"/>
</dbReference>
<dbReference type="EMBL" id="AC007543">
    <property type="status" value="NOT_ANNOTATED_CDS"/>
    <property type="molecule type" value="Genomic_DNA"/>
</dbReference>
<dbReference type="EMBL" id="AC022334">
    <property type="status" value="NOT_ANNOTATED_CDS"/>
    <property type="molecule type" value="Genomic_DNA"/>
</dbReference>
<dbReference type="EMBL" id="AC092183">
    <property type="status" value="NOT_ANNOTATED_CDS"/>
    <property type="molecule type" value="Genomic_DNA"/>
</dbReference>
<dbReference type="EMBL" id="CH471094">
    <property type="protein sequence ID" value="EAW96345.1"/>
    <property type="molecule type" value="Genomic_DNA"/>
</dbReference>
<dbReference type="EMBL" id="BC007997">
    <property type="protein sequence ID" value="AAH07997.1"/>
    <property type="molecule type" value="mRNA"/>
</dbReference>
<dbReference type="CCDS" id="CCDS53753.1">
    <molecule id="Q96A58-2"/>
</dbReference>
<dbReference type="CCDS" id="CCDS8673.1">
    <molecule id="Q96A58-1"/>
</dbReference>
<dbReference type="RefSeq" id="NP_001177655.1">
    <molecule id="Q96A58-2"/>
    <property type="nucleotide sequence ID" value="NM_001190726.2"/>
</dbReference>
<dbReference type="RefSeq" id="NP_116307.1">
    <molecule id="Q96A58-1"/>
    <property type="nucleotide sequence ID" value="NM_032918.3"/>
</dbReference>
<dbReference type="PDB" id="2ATV">
    <property type="method" value="X-ray"/>
    <property type="resolution" value="1.90 A"/>
    <property type="chains" value="A=1-174"/>
</dbReference>
<dbReference type="PDBsum" id="2ATV"/>
<dbReference type="SMR" id="Q96A58"/>
<dbReference type="BioGRID" id="124423">
    <property type="interactions" value="4"/>
</dbReference>
<dbReference type="FunCoup" id="Q96A58">
    <property type="interactions" value="1790"/>
</dbReference>
<dbReference type="IntAct" id="Q96A58">
    <property type="interactions" value="2"/>
</dbReference>
<dbReference type="STRING" id="9606.ENSP00000256953"/>
<dbReference type="iPTMnet" id="Q96A58"/>
<dbReference type="PhosphoSitePlus" id="Q96A58"/>
<dbReference type="BioMuta" id="RERG"/>
<dbReference type="DMDM" id="74731090"/>
<dbReference type="jPOST" id="Q96A58"/>
<dbReference type="MassIVE" id="Q96A58"/>
<dbReference type="PaxDb" id="9606-ENSP00000256953"/>
<dbReference type="PeptideAtlas" id="Q96A58"/>
<dbReference type="ProteomicsDB" id="75918">
    <molecule id="Q96A58-1"/>
</dbReference>
<dbReference type="ProteomicsDB" id="75919">
    <molecule id="Q96A58-2"/>
</dbReference>
<dbReference type="Pumba" id="Q96A58"/>
<dbReference type="Antibodypedia" id="23714">
    <property type="antibodies" value="145 antibodies from 27 providers"/>
</dbReference>
<dbReference type="DNASU" id="85004"/>
<dbReference type="Ensembl" id="ENST00000256953.6">
    <molecule id="Q96A58-1"/>
    <property type="protein sequence ID" value="ENSP00000256953.2"/>
    <property type="gene ID" value="ENSG00000134533.6"/>
</dbReference>
<dbReference type="Ensembl" id="ENST00000536465.5">
    <molecule id="Q96A58-1"/>
    <property type="protein sequence ID" value="ENSP00000438280.1"/>
    <property type="gene ID" value="ENSG00000134533.6"/>
</dbReference>
<dbReference type="Ensembl" id="ENST00000538313.5">
    <molecule id="Q96A58-1"/>
    <property type="protein sequence ID" value="ENSP00000441505.1"/>
    <property type="gene ID" value="ENSG00000134533.6"/>
</dbReference>
<dbReference type="Ensembl" id="ENST00000546331.5">
    <molecule id="Q96A58-2"/>
    <property type="protein sequence ID" value="ENSP00000444485.1"/>
    <property type="gene ID" value="ENSG00000134533.6"/>
</dbReference>
<dbReference type="GeneID" id="85004"/>
<dbReference type="KEGG" id="hsa:85004"/>
<dbReference type="MANE-Select" id="ENST00000256953.6">
    <property type="protein sequence ID" value="ENSP00000256953.2"/>
    <property type="RefSeq nucleotide sequence ID" value="NM_032918.3"/>
    <property type="RefSeq protein sequence ID" value="NP_116307.1"/>
</dbReference>
<dbReference type="UCSC" id="uc001rcs.4">
    <molecule id="Q96A58-1"/>
    <property type="organism name" value="human"/>
</dbReference>
<dbReference type="AGR" id="HGNC:15980"/>
<dbReference type="CTD" id="85004"/>
<dbReference type="DisGeNET" id="85004"/>
<dbReference type="GeneCards" id="RERG"/>
<dbReference type="HGNC" id="HGNC:15980">
    <property type="gene designation" value="RERG"/>
</dbReference>
<dbReference type="HPA" id="ENSG00000134533">
    <property type="expression patterns" value="Tissue enhanced (endometrium)"/>
</dbReference>
<dbReference type="MIM" id="612664">
    <property type="type" value="gene"/>
</dbReference>
<dbReference type="neXtProt" id="NX_Q96A58"/>
<dbReference type="OpenTargets" id="ENSG00000134533"/>
<dbReference type="PharmGKB" id="PA34333"/>
<dbReference type="VEuPathDB" id="HostDB:ENSG00000134533"/>
<dbReference type="eggNOG" id="KOG0395">
    <property type="taxonomic scope" value="Eukaryota"/>
</dbReference>
<dbReference type="GeneTree" id="ENSGT00940000159750"/>
<dbReference type="HOGENOM" id="CLU_041217_9_7_1"/>
<dbReference type="InParanoid" id="Q96A58"/>
<dbReference type="OMA" id="KELCGEY"/>
<dbReference type="OrthoDB" id="18798at2759"/>
<dbReference type="PAN-GO" id="Q96A58">
    <property type="GO annotations" value="5 GO annotations based on evolutionary models"/>
</dbReference>
<dbReference type="PhylomeDB" id="Q96A58"/>
<dbReference type="TreeFam" id="TF318030"/>
<dbReference type="PathwayCommons" id="Q96A58"/>
<dbReference type="SignaLink" id="Q96A58"/>
<dbReference type="BioGRID-ORCS" id="85004">
    <property type="hits" value="9 hits in 1153 CRISPR screens"/>
</dbReference>
<dbReference type="ChiTaRS" id="RERG">
    <property type="organism name" value="human"/>
</dbReference>
<dbReference type="EvolutionaryTrace" id="Q96A58"/>
<dbReference type="GenomeRNAi" id="85004"/>
<dbReference type="Pharos" id="Q96A58">
    <property type="development level" value="Tbio"/>
</dbReference>
<dbReference type="PRO" id="PR:Q96A58"/>
<dbReference type="Proteomes" id="UP000005640">
    <property type="component" value="Chromosome 12"/>
</dbReference>
<dbReference type="RNAct" id="Q96A58">
    <property type="molecule type" value="protein"/>
</dbReference>
<dbReference type="Bgee" id="ENSG00000134533">
    <property type="expression patterns" value="Expressed in germinal epithelium of ovary and 175 other cell types or tissues"/>
</dbReference>
<dbReference type="ExpressionAtlas" id="Q96A58">
    <property type="expression patterns" value="baseline and differential"/>
</dbReference>
<dbReference type="GO" id="GO:0005829">
    <property type="term" value="C:cytosol"/>
    <property type="evidence" value="ECO:0000314"/>
    <property type="project" value="HPA"/>
</dbReference>
<dbReference type="GO" id="GO:0001650">
    <property type="term" value="C:fibrillar center"/>
    <property type="evidence" value="ECO:0000314"/>
    <property type="project" value="HPA"/>
</dbReference>
<dbReference type="GO" id="GO:0005654">
    <property type="term" value="C:nucleoplasm"/>
    <property type="evidence" value="ECO:0000314"/>
    <property type="project" value="HPA"/>
</dbReference>
<dbReference type="GO" id="GO:0005634">
    <property type="term" value="C:nucleus"/>
    <property type="evidence" value="ECO:0000314"/>
    <property type="project" value="UniProtKB"/>
</dbReference>
<dbReference type="GO" id="GO:0005886">
    <property type="term" value="C:plasma membrane"/>
    <property type="evidence" value="ECO:0000318"/>
    <property type="project" value="GO_Central"/>
</dbReference>
<dbReference type="GO" id="GO:0003925">
    <property type="term" value="F:G protein activity"/>
    <property type="evidence" value="ECO:0007669"/>
    <property type="project" value="UniProtKB-EC"/>
</dbReference>
<dbReference type="GO" id="GO:0019003">
    <property type="term" value="F:GDP binding"/>
    <property type="evidence" value="ECO:0000318"/>
    <property type="project" value="GO_Central"/>
</dbReference>
<dbReference type="GO" id="GO:0005525">
    <property type="term" value="F:GTP binding"/>
    <property type="evidence" value="ECO:0000318"/>
    <property type="project" value="GO_Central"/>
</dbReference>
<dbReference type="GO" id="GO:0003924">
    <property type="term" value="F:GTPase activity"/>
    <property type="evidence" value="ECO:0000314"/>
    <property type="project" value="UniProtKB"/>
</dbReference>
<dbReference type="GO" id="GO:0030331">
    <property type="term" value="F:nuclear estrogen receptor binding"/>
    <property type="evidence" value="ECO:0000303"/>
    <property type="project" value="UniProtKB"/>
</dbReference>
<dbReference type="GO" id="GO:0030308">
    <property type="term" value="P:negative regulation of cell growth"/>
    <property type="evidence" value="ECO:0000314"/>
    <property type="project" value="UniProtKB"/>
</dbReference>
<dbReference type="GO" id="GO:0008285">
    <property type="term" value="P:negative regulation of cell population proliferation"/>
    <property type="evidence" value="ECO:0000314"/>
    <property type="project" value="UniProtKB"/>
</dbReference>
<dbReference type="GO" id="GO:0009725">
    <property type="term" value="P:response to hormone"/>
    <property type="evidence" value="ECO:0000314"/>
    <property type="project" value="UniProtKB"/>
</dbReference>
<dbReference type="GO" id="GO:0007264">
    <property type="term" value="P:small GTPase-mediated signal transduction"/>
    <property type="evidence" value="ECO:0000303"/>
    <property type="project" value="UniProtKB"/>
</dbReference>
<dbReference type="CDD" id="cd04146">
    <property type="entry name" value="RERG_RasL11_like"/>
    <property type="match status" value="1"/>
</dbReference>
<dbReference type="FunFam" id="3.40.50.300:FF:000942">
    <property type="entry name" value="Ras-related and estrogen-regulated growth inhibitor"/>
    <property type="match status" value="1"/>
</dbReference>
<dbReference type="Gene3D" id="3.40.50.300">
    <property type="entry name" value="P-loop containing nucleotide triphosphate hydrolases"/>
    <property type="match status" value="1"/>
</dbReference>
<dbReference type="InterPro" id="IPR027417">
    <property type="entry name" value="P-loop_NTPase"/>
</dbReference>
<dbReference type="InterPro" id="IPR051065">
    <property type="entry name" value="Ras-related_GTPase"/>
</dbReference>
<dbReference type="InterPro" id="IPR005225">
    <property type="entry name" value="Small_GTP-bd"/>
</dbReference>
<dbReference type="InterPro" id="IPR001806">
    <property type="entry name" value="Small_GTPase"/>
</dbReference>
<dbReference type="NCBIfam" id="TIGR00231">
    <property type="entry name" value="small_GTP"/>
    <property type="match status" value="1"/>
</dbReference>
<dbReference type="PANTHER" id="PTHR45704">
    <property type="entry name" value="RAS-LIKE FAMILY MEMBER 11"/>
    <property type="match status" value="1"/>
</dbReference>
<dbReference type="Pfam" id="PF00071">
    <property type="entry name" value="Ras"/>
    <property type="match status" value="1"/>
</dbReference>
<dbReference type="PRINTS" id="PR00449">
    <property type="entry name" value="RASTRNSFRMNG"/>
</dbReference>
<dbReference type="SMART" id="SM00175">
    <property type="entry name" value="RAB"/>
    <property type="match status" value="1"/>
</dbReference>
<dbReference type="SMART" id="SM00173">
    <property type="entry name" value="RAS"/>
    <property type="match status" value="1"/>
</dbReference>
<dbReference type="SMART" id="SM00174">
    <property type="entry name" value="RHO"/>
    <property type="match status" value="1"/>
</dbReference>
<dbReference type="SUPFAM" id="SSF52540">
    <property type="entry name" value="P-loop containing nucleoside triphosphate hydrolases"/>
    <property type="match status" value="1"/>
</dbReference>
<dbReference type="PROSITE" id="PS51421">
    <property type="entry name" value="RAS"/>
    <property type="match status" value="1"/>
</dbReference>
<proteinExistence type="evidence at protein level"/>
<name>RERG_HUMAN</name>